<proteinExistence type="inferred from homology"/>
<gene>
    <name evidence="1" type="primary">carB</name>
    <name type="ordered locus">TRQ2_0380</name>
</gene>
<keyword id="KW-0028">Amino-acid biosynthesis</keyword>
<keyword id="KW-0055">Arginine biosynthesis</keyword>
<keyword id="KW-0067">ATP-binding</keyword>
<keyword id="KW-0436">Ligase</keyword>
<keyword id="KW-0460">Magnesium</keyword>
<keyword id="KW-0464">Manganese</keyword>
<keyword id="KW-0479">Metal-binding</keyword>
<keyword id="KW-0547">Nucleotide-binding</keyword>
<keyword id="KW-0665">Pyrimidine biosynthesis</keyword>
<keyword id="KW-0677">Repeat</keyword>
<name>CARB_THESQ</name>
<comment type="function">
    <text evidence="1">Large subunit of the glutamine-dependent carbamoyl phosphate synthetase (CPSase). CPSase catalyzes the formation of carbamoyl phosphate from the ammonia moiety of glutamine, carbonate, and phosphate donated by ATP, constituting the first step of 2 biosynthetic pathways, one leading to arginine and/or urea and the other to pyrimidine nucleotides. The large subunit (synthetase) binds the substrates ammonia (free or transferred from glutamine from the small subunit), hydrogencarbonate and ATP and carries out an ATP-coupled ligase reaction, activating hydrogencarbonate by forming carboxy phosphate which reacts with ammonia to form carbamoyl phosphate.</text>
</comment>
<comment type="catalytic activity">
    <reaction evidence="1">
        <text>hydrogencarbonate + L-glutamine + 2 ATP + H2O = carbamoyl phosphate + L-glutamate + 2 ADP + phosphate + 2 H(+)</text>
        <dbReference type="Rhea" id="RHEA:18633"/>
        <dbReference type="ChEBI" id="CHEBI:15377"/>
        <dbReference type="ChEBI" id="CHEBI:15378"/>
        <dbReference type="ChEBI" id="CHEBI:17544"/>
        <dbReference type="ChEBI" id="CHEBI:29985"/>
        <dbReference type="ChEBI" id="CHEBI:30616"/>
        <dbReference type="ChEBI" id="CHEBI:43474"/>
        <dbReference type="ChEBI" id="CHEBI:58228"/>
        <dbReference type="ChEBI" id="CHEBI:58359"/>
        <dbReference type="ChEBI" id="CHEBI:456216"/>
        <dbReference type="EC" id="6.3.5.5"/>
    </reaction>
</comment>
<comment type="catalytic activity">
    <molecule>Carbamoyl phosphate synthase large chain</molecule>
    <reaction evidence="1">
        <text>hydrogencarbonate + NH4(+) + 2 ATP = carbamoyl phosphate + 2 ADP + phosphate + 2 H(+)</text>
        <dbReference type="Rhea" id="RHEA:18029"/>
        <dbReference type="ChEBI" id="CHEBI:15378"/>
        <dbReference type="ChEBI" id="CHEBI:17544"/>
        <dbReference type="ChEBI" id="CHEBI:28938"/>
        <dbReference type="ChEBI" id="CHEBI:30616"/>
        <dbReference type="ChEBI" id="CHEBI:43474"/>
        <dbReference type="ChEBI" id="CHEBI:58228"/>
        <dbReference type="ChEBI" id="CHEBI:456216"/>
        <dbReference type="EC" id="6.3.4.16"/>
    </reaction>
</comment>
<comment type="cofactor">
    <cofactor evidence="1">
        <name>Mg(2+)</name>
        <dbReference type="ChEBI" id="CHEBI:18420"/>
    </cofactor>
    <cofactor evidence="1">
        <name>Mn(2+)</name>
        <dbReference type="ChEBI" id="CHEBI:29035"/>
    </cofactor>
    <text evidence="1">Binds 4 Mg(2+) or Mn(2+) ions per subunit.</text>
</comment>
<comment type="pathway">
    <text evidence="1">Amino-acid biosynthesis; L-arginine biosynthesis; carbamoyl phosphate from bicarbonate: step 1/1.</text>
</comment>
<comment type="pathway">
    <text evidence="1">Pyrimidine metabolism; UMP biosynthesis via de novo pathway; (S)-dihydroorotate from bicarbonate: step 1/3.</text>
</comment>
<comment type="subunit">
    <text evidence="1">Composed of two chains; the small (or glutamine) chain promotes the hydrolysis of glutamine to ammonia, which is used by the large (or ammonia) chain to synthesize carbamoyl phosphate. Tetramer of heterodimers (alpha,beta)4.</text>
</comment>
<comment type="domain">
    <text evidence="1">The large subunit is composed of 2 ATP-grasp domains that are involved in binding the 2 ATP molecules needed for carbamoyl phosphate synthesis. The N-terminal ATP-grasp domain (referred to as the carboxyphosphate synthetic component) catalyzes the ATP-dependent phosphorylation of hydrogencarbonate to carboxyphosphate and the subsequent nucleophilic attack by ammonia to form a carbamate intermediate. The C-terminal ATP-grasp domain (referred to as the carbamoyl phosphate synthetic component) then catalyzes the phosphorylation of carbamate with the second ATP to form the end product carbamoyl phosphate. The reactive and unstable enzyme intermediates are sequentially channeled from one active site to the next through the interior of the protein over a distance of at least 96 A.</text>
</comment>
<comment type="similarity">
    <text evidence="1">Belongs to the CarB family.</text>
</comment>
<accession>B1L8T8</accession>
<sequence>MPKREDIKRILVIGSGPITIGQAAEFDYSGTQALKALKSAGYEVIIVNSNSATIMTDPEFSDAVYIEPLTVEFLEKIIEKERPDALLPTLGGQTALNLAVELAERGILDKYGVQLIGAKLDSIKKAEDRELFKETMEKAGLEVLRSRLVNNLADALETAREFGYPVIIRPSFTLGGTGGGIAFNEEELRDIVTKGLIESPVHTVLIEESVLGWKEYELEVVRDGAGNFIVVCSIENLDPMGIHTGDSITVAPAQTLTDVEYQRMRDAAHKVIDAIGIETGGSNIQFAVDPETGRMVVIEMNPRVSRSSALASKATGYPIAKVAALLAVGFTLDEIPNYITGKTMAAFEPSIDYVVVKIPRFQLEKFPGADPRLNTQMKSVGEVMAIGRTFKEALGKALRSLELDAAPKLDLEHIREHLANPTPERISYIFAAFRNGMDVEEVHELTKIDRWFLREMKACIELEEELKLKKFDVEILKKAKQWGYSDREIAEIWGVSEKEIRKMREDNRIFPVYKMVDTCAAEFEAQTPYYYSTYNGVENEAVPSDREKIMILGSGPNRIGQGIEFDYTNVHGVWAFQEEGYETIMVNSNPETVSTDYDTSDRLYFEPLTVEDVLEIVRNEKPKGVVVAFGGQTPLKIAKYLVEERVNIIGTSFESIEIAEDREKFAKLLKQIGLKCPPFGTASSVEEALRVAENLGYPVLVRPSYVLGGRAMAIVDTPQELEMYVKEAAVVSPGYPVLIDKFLEDAIELDVDVVSDGKYVWIAGLMEQIEEAGVHSGDSACVLPPVSLSEKLVEEIEETVYKLVKALKVVGVANIQLAVKDEEIYIIEANPRASRTVPFVSKAIGIPVARIAAKIMVGRNLPELLSEYFPYPTRPGVKVDKLGESEILPTPWPKMFSVKEVVIPFHKFPGTDVLLGPEMRSTGEVMGIGEDFAEAFAKAQIAAGNPLPTTGAILATVADKDKREAVPLLAHLADMGFEIYATRGTAKALQSHGVEVKVVPKVGEGRPDVIDLLEQGKISLVVITQSSDEPALVAVSHGKEPFKVEGRRTVGYMIRTTALKRKIPYLTTVESLRAAVAAIRKMKKGSIVKVRRLTDTWKM</sequence>
<dbReference type="EC" id="6.3.4.16" evidence="1"/>
<dbReference type="EC" id="6.3.5.5" evidence="1"/>
<dbReference type="EMBL" id="CP000969">
    <property type="protein sequence ID" value="ACB08736.1"/>
    <property type="molecule type" value="Genomic_DNA"/>
</dbReference>
<dbReference type="RefSeq" id="WP_012310509.1">
    <property type="nucleotide sequence ID" value="NC_010483.1"/>
</dbReference>
<dbReference type="SMR" id="B1L8T8"/>
<dbReference type="KEGG" id="trq:TRQ2_0380"/>
<dbReference type="HOGENOM" id="CLU_000513_1_0_0"/>
<dbReference type="UniPathway" id="UPA00068">
    <property type="reaction ID" value="UER00171"/>
</dbReference>
<dbReference type="UniPathway" id="UPA00070">
    <property type="reaction ID" value="UER00115"/>
</dbReference>
<dbReference type="Proteomes" id="UP000001687">
    <property type="component" value="Chromosome"/>
</dbReference>
<dbReference type="GO" id="GO:0005737">
    <property type="term" value="C:cytoplasm"/>
    <property type="evidence" value="ECO:0007669"/>
    <property type="project" value="TreeGrafter"/>
</dbReference>
<dbReference type="GO" id="GO:0005524">
    <property type="term" value="F:ATP binding"/>
    <property type="evidence" value="ECO:0007669"/>
    <property type="project" value="UniProtKB-UniRule"/>
</dbReference>
<dbReference type="GO" id="GO:0004087">
    <property type="term" value="F:carbamoyl-phosphate synthase (ammonia) activity"/>
    <property type="evidence" value="ECO:0007669"/>
    <property type="project" value="RHEA"/>
</dbReference>
<dbReference type="GO" id="GO:0004088">
    <property type="term" value="F:carbamoyl-phosphate synthase (glutamine-hydrolyzing) activity"/>
    <property type="evidence" value="ECO:0007669"/>
    <property type="project" value="UniProtKB-UniRule"/>
</dbReference>
<dbReference type="GO" id="GO:0046872">
    <property type="term" value="F:metal ion binding"/>
    <property type="evidence" value="ECO:0007669"/>
    <property type="project" value="UniProtKB-KW"/>
</dbReference>
<dbReference type="GO" id="GO:0044205">
    <property type="term" value="P:'de novo' UMP biosynthetic process"/>
    <property type="evidence" value="ECO:0007669"/>
    <property type="project" value="UniProtKB-UniRule"/>
</dbReference>
<dbReference type="GO" id="GO:0006541">
    <property type="term" value="P:glutamine metabolic process"/>
    <property type="evidence" value="ECO:0007669"/>
    <property type="project" value="TreeGrafter"/>
</dbReference>
<dbReference type="GO" id="GO:0006526">
    <property type="term" value="P:L-arginine biosynthetic process"/>
    <property type="evidence" value="ECO:0007669"/>
    <property type="project" value="UniProtKB-UniRule"/>
</dbReference>
<dbReference type="CDD" id="cd01424">
    <property type="entry name" value="MGS_CPS_II"/>
    <property type="match status" value="1"/>
</dbReference>
<dbReference type="FunFam" id="1.10.1030.10:FF:000002">
    <property type="entry name" value="Carbamoyl-phosphate synthase large chain"/>
    <property type="match status" value="1"/>
</dbReference>
<dbReference type="FunFam" id="3.30.1490.20:FF:000001">
    <property type="entry name" value="Carbamoyl-phosphate synthase large chain"/>
    <property type="match status" value="1"/>
</dbReference>
<dbReference type="FunFam" id="3.30.470.20:FF:000007">
    <property type="entry name" value="Carbamoyl-phosphate synthase large chain"/>
    <property type="match status" value="1"/>
</dbReference>
<dbReference type="FunFam" id="3.30.470.20:FF:000026">
    <property type="entry name" value="Carbamoyl-phosphate synthase large chain"/>
    <property type="match status" value="1"/>
</dbReference>
<dbReference type="FunFam" id="3.40.50.20:FF:000001">
    <property type="entry name" value="Carbamoyl-phosphate synthase large chain"/>
    <property type="match status" value="1"/>
</dbReference>
<dbReference type="FunFam" id="3.40.50.20:FF:000003">
    <property type="entry name" value="Carbamoyl-phosphate synthase large chain"/>
    <property type="match status" value="1"/>
</dbReference>
<dbReference type="Gene3D" id="3.40.50.20">
    <property type="match status" value="2"/>
</dbReference>
<dbReference type="Gene3D" id="3.30.1490.20">
    <property type="entry name" value="ATP-grasp fold, A domain"/>
    <property type="match status" value="1"/>
</dbReference>
<dbReference type="Gene3D" id="3.30.470.20">
    <property type="entry name" value="ATP-grasp fold, B domain"/>
    <property type="match status" value="2"/>
</dbReference>
<dbReference type="Gene3D" id="1.10.1030.10">
    <property type="entry name" value="Carbamoyl-phosphate synthetase, large subunit oligomerisation domain"/>
    <property type="match status" value="1"/>
</dbReference>
<dbReference type="Gene3D" id="3.40.50.1380">
    <property type="entry name" value="Methylglyoxal synthase-like domain"/>
    <property type="match status" value="1"/>
</dbReference>
<dbReference type="HAMAP" id="MF_01210_A">
    <property type="entry name" value="CPSase_L_chain_A"/>
    <property type="match status" value="1"/>
</dbReference>
<dbReference type="HAMAP" id="MF_01210_B">
    <property type="entry name" value="CPSase_L_chain_B"/>
    <property type="match status" value="1"/>
</dbReference>
<dbReference type="InterPro" id="IPR011761">
    <property type="entry name" value="ATP-grasp"/>
</dbReference>
<dbReference type="InterPro" id="IPR013815">
    <property type="entry name" value="ATP_grasp_subdomain_1"/>
</dbReference>
<dbReference type="InterPro" id="IPR006275">
    <property type="entry name" value="CarbamoylP_synth_lsu"/>
</dbReference>
<dbReference type="InterPro" id="IPR005480">
    <property type="entry name" value="CarbamoylP_synth_lsu_oligo"/>
</dbReference>
<dbReference type="InterPro" id="IPR036897">
    <property type="entry name" value="CarbamoylP_synth_lsu_oligo_sf"/>
</dbReference>
<dbReference type="InterPro" id="IPR005479">
    <property type="entry name" value="CbamoylP_synth_lsu-like_ATP-bd"/>
</dbReference>
<dbReference type="InterPro" id="IPR005483">
    <property type="entry name" value="CbamoylP_synth_lsu_CPSase_dom"/>
</dbReference>
<dbReference type="InterPro" id="IPR011607">
    <property type="entry name" value="MGS-like_dom"/>
</dbReference>
<dbReference type="InterPro" id="IPR036914">
    <property type="entry name" value="MGS-like_dom_sf"/>
</dbReference>
<dbReference type="InterPro" id="IPR033937">
    <property type="entry name" value="MGS_CPS_CarB"/>
</dbReference>
<dbReference type="InterPro" id="IPR016185">
    <property type="entry name" value="PreATP-grasp_dom_sf"/>
</dbReference>
<dbReference type="NCBIfam" id="TIGR01369">
    <property type="entry name" value="CPSaseII_lrg"/>
    <property type="match status" value="1"/>
</dbReference>
<dbReference type="NCBIfam" id="NF003671">
    <property type="entry name" value="PRK05294.1"/>
    <property type="match status" value="1"/>
</dbReference>
<dbReference type="NCBIfam" id="NF009455">
    <property type="entry name" value="PRK12815.1"/>
    <property type="match status" value="1"/>
</dbReference>
<dbReference type="PANTHER" id="PTHR11405:SF53">
    <property type="entry name" value="CARBAMOYL-PHOSPHATE SYNTHASE [AMMONIA], MITOCHONDRIAL"/>
    <property type="match status" value="1"/>
</dbReference>
<dbReference type="PANTHER" id="PTHR11405">
    <property type="entry name" value="CARBAMOYLTRANSFERASE FAMILY MEMBER"/>
    <property type="match status" value="1"/>
</dbReference>
<dbReference type="Pfam" id="PF02786">
    <property type="entry name" value="CPSase_L_D2"/>
    <property type="match status" value="2"/>
</dbReference>
<dbReference type="Pfam" id="PF02787">
    <property type="entry name" value="CPSase_L_D3"/>
    <property type="match status" value="1"/>
</dbReference>
<dbReference type="Pfam" id="PF02142">
    <property type="entry name" value="MGS"/>
    <property type="match status" value="1"/>
</dbReference>
<dbReference type="PRINTS" id="PR00098">
    <property type="entry name" value="CPSASE"/>
</dbReference>
<dbReference type="SMART" id="SM01096">
    <property type="entry name" value="CPSase_L_D3"/>
    <property type="match status" value="1"/>
</dbReference>
<dbReference type="SMART" id="SM00851">
    <property type="entry name" value="MGS"/>
    <property type="match status" value="1"/>
</dbReference>
<dbReference type="SUPFAM" id="SSF48108">
    <property type="entry name" value="Carbamoyl phosphate synthetase, large subunit connection domain"/>
    <property type="match status" value="1"/>
</dbReference>
<dbReference type="SUPFAM" id="SSF56059">
    <property type="entry name" value="Glutathione synthetase ATP-binding domain-like"/>
    <property type="match status" value="2"/>
</dbReference>
<dbReference type="SUPFAM" id="SSF52335">
    <property type="entry name" value="Methylglyoxal synthase-like"/>
    <property type="match status" value="1"/>
</dbReference>
<dbReference type="SUPFAM" id="SSF52440">
    <property type="entry name" value="PreATP-grasp domain"/>
    <property type="match status" value="2"/>
</dbReference>
<dbReference type="PROSITE" id="PS50975">
    <property type="entry name" value="ATP_GRASP"/>
    <property type="match status" value="2"/>
</dbReference>
<dbReference type="PROSITE" id="PS00866">
    <property type="entry name" value="CPSASE_1"/>
    <property type="match status" value="2"/>
</dbReference>
<dbReference type="PROSITE" id="PS00867">
    <property type="entry name" value="CPSASE_2"/>
    <property type="match status" value="2"/>
</dbReference>
<dbReference type="PROSITE" id="PS51855">
    <property type="entry name" value="MGS"/>
    <property type="match status" value="1"/>
</dbReference>
<organism>
    <name type="scientific">Thermotoga sp. (strain RQ2)</name>
    <dbReference type="NCBI Taxonomy" id="126740"/>
    <lineage>
        <taxon>Bacteria</taxon>
        <taxon>Thermotogati</taxon>
        <taxon>Thermotogota</taxon>
        <taxon>Thermotogae</taxon>
        <taxon>Thermotogales</taxon>
        <taxon>Thermotogaceae</taxon>
        <taxon>Thermotoga</taxon>
    </lineage>
</organism>
<evidence type="ECO:0000255" key="1">
    <source>
        <dbReference type="HAMAP-Rule" id="MF_01210"/>
    </source>
</evidence>
<reference key="1">
    <citation type="journal article" date="2011" name="J. Bacteriol.">
        <title>Genome sequence of Thermotoga sp. strain RQ2, a hyperthermophilic bacterium isolated from a geothermally heated region of the seafloor near Ribeira Quente, the Azores.</title>
        <authorList>
            <person name="Swithers K.S."/>
            <person name="DiPippo J.L."/>
            <person name="Bruce D.C."/>
            <person name="Detter C."/>
            <person name="Tapia R."/>
            <person name="Han S."/>
            <person name="Saunders E."/>
            <person name="Goodwin L.A."/>
            <person name="Han J."/>
            <person name="Woyke T."/>
            <person name="Pitluck S."/>
            <person name="Pennacchio L."/>
            <person name="Nolan M."/>
            <person name="Mikhailova N."/>
            <person name="Lykidis A."/>
            <person name="Land M.L."/>
            <person name="Brettin T."/>
            <person name="Stetter K.O."/>
            <person name="Nelson K.E."/>
            <person name="Gogarten J.P."/>
            <person name="Noll K.M."/>
        </authorList>
    </citation>
    <scope>NUCLEOTIDE SEQUENCE [LARGE SCALE GENOMIC DNA]</scope>
    <source>
        <strain>RQ2</strain>
    </source>
</reference>
<feature type="chain" id="PRO_1000138905" description="Carbamoyl phosphate synthase large chain">
    <location>
        <begin position="1"/>
        <end position="1099"/>
    </location>
</feature>
<feature type="domain" description="ATP-grasp 1" evidence="1">
    <location>
        <begin position="133"/>
        <end position="328"/>
    </location>
</feature>
<feature type="domain" description="ATP-grasp 2" evidence="1">
    <location>
        <begin position="666"/>
        <end position="857"/>
    </location>
</feature>
<feature type="domain" description="MGS-like" evidence="1">
    <location>
        <begin position="945"/>
        <end position="1099"/>
    </location>
</feature>
<feature type="region of interest" description="Carboxyphosphate synthetic domain" evidence="1">
    <location>
        <begin position="1"/>
        <end position="402"/>
    </location>
</feature>
<feature type="region of interest" description="Oligomerization domain" evidence="1">
    <location>
        <begin position="403"/>
        <end position="541"/>
    </location>
</feature>
<feature type="region of interest" description="Carbamoyl phosphate synthetic domain" evidence="1">
    <location>
        <begin position="542"/>
        <end position="944"/>
    </location>
</feature>
<feature type="region of interest" description="Allosteric domain" evidence="1">
    <location>
        <begin position="945"/>
        <end position="1099"/>
    </location>
</feature>
<feature type="binding site" evidence="1">
    <location>
        <position position="129"/>
    </location>
    <ligand>
        <name>ATP</name>
        <dbReference type="ChEBI" id="CHEBI:30616"/>
        <label>1</label>
    </ligand>
</feature>
<feature type="binding site" evidence="1">
    <location>
        <position position="169"/>
    </location>
    <ligand>
        <name>ATP</name>
        <dbReference type="ChEBI" id="CHEBI:30616"/>
        <label>1</label>
    </ligand>
</feature>
<feature type="binding site" evidence="1">
    <location>
        <position position="175"/>
    </location>
    <ligand>
        <name>ATP</name>
        <dbReference type="ChEBI" id="CHEBI:30616"/>
        <label>1</label>
    </ligand>
</feature>
<feature type="binding site" evidence="1">
    <location>
        <position position="176"/>
    </location>
    <ligand>
        <name>ATP</name>
        <dbReference type="ChEBI" id="CHEBI:30616"/>
        <label>1</label>
    </ligand>
</feature>
<feature type="binding site" evidence="1">
    <location>
        <position position="208"/>
    </location>
    <ligand>
        <name>ATP</name>
        <dbReference type="ChEBI" id="CHEBI:30616"/>
        <label>1</label>
    </ligand>
</feature>
<feature type="binding site" evidence="1">
    <location>
        <position position="210"/>
    </location>
    <ligand>
        <name>ATP</name>
        <dbReference type="ChEBI" id="CHEBI:30616"/>
        <label>1</label>
    </ligand>
</feature>
<feature type="binding site" evidence="1">
    <location>
        <position position="215"/>
    </location>
    <ligand>
        <name>ATP</name>
        <dbReference type="ChEBI" id="CHEBI:30616"/>
        <label>1</label>
    </ligand>
</feature>
<feature type="binding site" evidence="1">
    <location>
        <position position="241"/>
    </location>
    <ligand>
        <name>ATP</name>
        <dbReference type="ChEBI" id="CHEBI:30616"/>
        <label>1</label>
    </ligand>
</feature>
<feature type="binding site" evidence="1">
    <location>
        <position position="242"/>
    </location>
    <ligand>
        <name>ATP</name>
        <dbReference type="ChEBI" id="CHEBI:30616"/>
        <label>1</label>
    </ligand>
</feature>
<feature type="binding site" evidence="1">
    <location>
        <position position="243"/>
    </location>
    <ligand>
        <name>ATP</name>
        <dbReference type="ChEBI" id="CHEBI:30616"/>
        <label>1</label>
    </ligand>
</feature>
<feature type="binding site" evidence="1">
    <location>
        <position position="285"/>
    </location>
    <ligand>
        <name>ATP</name>
        <dbReference type="ChEBI" id="CHEBI:30616"/>
        <label>1</label>
    </ligand>
</feature>
<feature type="binding site" evidence="1">
    <location>
        <position position="285"/>
    </location>
    <ligand>
        <name>Mg(2+)</name>
        <dbReference type="ChEBI" id="CHEBI:18420"/>
        <label>1</label>
    </ligand>
</feature>
<feature type="binding site" evidence="1">
    <location>
        <position position="285"/>
    </location>
    <ligand>
        <name>Mn(2+)</name>
        <dbReference type="ChEBI" id="CHEBI:29035"/>
        <label>1</label>
    </ligand>
</feature>
<feature type="binding site" evidence="1">
    <location>
        <position position="299"/>
    </location>
    <ligand>
        <name>ATP</name>
        <dbReference type="ChEBI" id="CHEBI:30616"/>
        <label>1</label>
    </ligand>
</feature>
<feature type="binding site" evidence="1">
    <location>
        <position position="299"/>
    </location>
    <ligand>
        <name>Mg(2+)</name>
        <dbReference type="ChEBI" id="CHEBI:18420"/>
        <label>1</label>
    </ligand>
</feature>
<feature type="binding site" evidence="1">
    <location>
        <position position="299"/>
    </location>
    <ligand>
        <name>Mg(2+)</name>
        <dbReference type="ChEBI" id="CHEBI:18420"/>
        <label>2</label>
    </ligand>
</feature>
<feature type="binding site" evidence="1">
    <location>
        <position position="299"/>
    </location>
    <ligand>
        <name>Mn(2+)</name>
        <dbReference type="ChEBI" id="CHEBI:29035"/>
        <label>1</label>
    </ligand>
</feature>
<feature type="binding site" evidence="1">
    <location>
        <position position="299"/>
    </location>
    <ligand>
        <name>Mn(2+)</name>
        <dbReference type="ChEBI" id="CHEBI:29035"/>
        <label>2</label>
    </ligand>
</feature>
<feature type="binding site" evidence="1">
    <location>
        <position position="301"/>
    </location>
    <ligand>
        <name>Mg(2+)</name>
        <dbReference type="ChEBI" id="CHEBI:18420"/>
        <label>2</label>
    </ligand>
</feature>
<feature type="binding site" evidence="1">
    <location>
        <position position="301"/>
    </location>
    <ligand>
        <name>Mn(2+)</name>
        <dbReference type="ChEBI" id="CHEBI:29035"/>
        <label>2</label>
    </ligand>
</feature>
<feature type="binding site" evidence="1">
    <location>
        <position position="702"/>
    </location>
    <ligand>
        <name>ATP</name>
        <dbReference type="ChEBI" id="CHEBI:30616"/>
        <label>2</label>
    </ligand>
</feature>
<feature type="binding site" evidence="1">
    <location>
        <position position="741"/>
    </location>
    <ligand>
        <name>ATP</name>
        <dbReference type="ChEBI" id="CHEBI:30616"/>
        <label>2</label>
    </ligand>
</feature>
<feature type="binding site" evidence="1">
    <location>
        <position position="743"/>
    </location>
    <ligand>
        <name>ATP</name>
        <dbReference type="ChEBI" id="CHEBI:30616"/>
        <label>2</label>
    </ligand>
</feature>
<feature type="binding site" evidence="1">
    <location>
        <position position="748"/>
    </location>
    <ligand>
        <name>ATP</name>
        <dbReference type="ChEBI" id="CHEBI:30616"/>
        <label>2</label>
    </ligand>
</feature>
<feature type="binding site" evidence="1">
    <location>
        <position position="773"/>
    </location>
    <ligand>
        <name>ATP</name>
        <dbReference type="ChEBI" id="CHEBI:30616"/>
        <label>2</label>
    </ligand>
</feature>
<feature type="binding site" evidence="1">
    <location>
        <position position="774"/>
    </location>
    <ligand>
        <name>ATP</name>
        <dbReference type="ChEBI" id="CHEBI:30616"/>
        <label>2</label>
    </ligand>
</feature>
<feature type="binding site" evidence="1">
    <location>
        <position position="775"/>
    </location>
    <ligand>
        <name>ATP</name>
        <dbReference type="ChEBI" id="CHEBI:30616"/>
        <label>2</label>
    </ligand>
</feature>
<feature type="binding site" evidence="1">
    <location>
        <position position="776"/>
    </location>
    <ligand>
        <name>ATP</name>
        <dbReference type="ChEBI" id="CHEBI:30616"/>
        <label>2</label>
    </ligand>
</feature>
<feature type="binding site" evidence="1">
    <location>
        <position position="816"/>
    </location>
    <ligand>
        <name>ATP</name>
        <dbReference type="ChEBI" id="CHEBI:30616"/>
        <label>2</label>
    </ligand>
</feature>
<feature type="binding site" evidence="1">
    <location>
        <position position="816"/>
    </location>
    <ligand>
        <name>Mg(2+)</name>
        <dbReference type="ChEBI" id="CHEBI:18420"/>
        <label>3</label>
    </ligand>
</feature>
<feature type="binding site" evidence="1">
    <location>
        <position position="816"/>
    </location>
    <ligand>
        <name>Mn(2+)</name>
        <dbReference type="ChEBI" id="CHEBI:29035"/>
        <label>3</label>
    </ligand>
</feature>
<feature type="binding site" evidence="1">
    <location>
        <position position="828"/>
    </location>
    <ligand>
        <name>ATP</name>
        <dbReference type="ChEBI" id="CHEBI:30616"/>
        <label>2</label>
    </ligand>
</feature>
<feature type="binding site" evidence="1">
    <location>
        <position position="828"/>
    </location>
    <ligand>
        <name>Mg(2+)</name>
        <dbReference type="ChEBI" id="CHEBI:18420"/>
        <label>3</label>
    </ligand>
</feature>
<feature type="binding site" evidence="1">
    <location>
        <position position="828"/>
    </location>
    <ligand>
        <name>Mg(2+)</name>
        <dbReference type="ChEBI" id="CHEBI:18420"/>
        <label>4</label>
    </ligand>
</feature>
<feature type="binding site" evidence="1">
    <location>
        <position position="828"/>
    </location>
    <ligand>
        <name>Mn(2+)</name>
        <dbReference type="ChEBI" id="CHEBI:29035"/>
        <label>3</label>
    </ligand>
</feature>
<feature type="binding site" evidence="1">
    <location>
        <position position="828"/>
    </location>
    <ligand>
        <name>Mn(2+)</name>
        <dbReference type="ChEBI" id="CHEBI:29035"/>
        <label>4</label>
    </ligand>
</feature>
<feature type="binding site" evidence="1">
    <location>
        <position position="830"/>
    </location>
    <ligand>
        <name>Mg(2+)</name>
        <dbReference type="ChEBI" id="CHEBI:18420"/>
        <label>4</label>
    </ligand>
</feature>
<feature type="binding site" evidence="1">
    <location>
        <position position="830"/>
    </location>
    <ligand>
        <name>Mn(2+)</name>
        <dbReference type="ChEBI" id="CHEBI:29035"/>
        <label>4</label>
    </ligand>
</feature>
<protein>
    <recommendedName>
        <fullName evidence="1">Carbamoyl phosphate synthase large chain</fullName>
        <ecNumber evidence="1">6.3.4.16</ecNumber>
        <ecNumber evidence="1">6.3.5.5</ecNumber>
    </recommendedName>
    <alternativeName>
        <fullName evidence="1">Carbamoyl phosphate synthetase ammonia chain</fullName>
    </alternativeName>
</protein>